<proteinExistence type="inferred from homology"/>
<accession>P67588</accession>
<accession>Q8X832</accession>
<protein>
    <recommendedName>
        <fullName evidence="1">Tryptophan--tRNA ligase</fullName>
        <ecNumber evidence="1">6.1.1.2</ecNumber>
    </recommendedName>
    <alternativeName>
        <fullName evidence="1">Tryptophanyl-tRNA synthetase</fullName>
        <shortName evidence="1">TrpRS</shortName>
    </alternativeName>
</protein>
<reference key="1">
    <citation type="journal article" date="2002" name="Proc. Natl. Acad. Sci. U.S.A.">
        <title>Extensive mosaic structure revealed by the complete genome sequence of uropathogenic Escherichia coli.</title>
        <authorList>
            <person name="Welch R.A."/>
            <person name="Burland V."/>
            <person name="Plunkett G. III"/>
            <person name="Redford P."/>
            <person name="Roesch P."/>
            <person name="Rasko D."/>
            <person name="Buckles E.L."/>
            <person name="Liou S.-R."/>
            <person name="Boutin A."/>
            <person name="Hackett J."/>
            <person name="Stroud D."/>
            <person name="Mayhew G.F."/>
            <person name="Rose D.J."/>
            <person name="Zhou S."/>
            <person name="Schwartz D.C."/>
            <person name="Perna N.T."/>
            <person name="Mobley H.L.T."/>
            <person name="Donnenberg M.S."/>
            <person name="Blattner F.R."/>
        </authorList>
    </citation>
    <scope>NUCLEOTIDE SEQUENCE [LARGE SCALE GENOMIC DNA]</scope>
    <source>
        <strain>CFT073 / ATCC 700928 / UPEC</strain>
    </source>
</reference>
<evidence type="ECO:0000255" key="1">
    <source>
        <dbReference type="HAMAP-Rule" id="MF_00140"/>
    </source>
</evidence>
<comment type="function">
    <text evidence="1">Catalyzes the attachment of tryptophan to tRNA(Trp).</text>
</comment>
<comment type="catalytic activity">
    <reaction evidence="1">
        <text>tRNA(Trp) + L-tryptophan + ATP = L-tryptophyl-tRNA(Trp) + AMP + diphosphate + H(+)</text>
        <dbReference type="Rhea" id="RHEA:24080"/>
        <dbReference type="Rhea" id="RHEA-COMP:9671"/>
        <dbReference type="Rhea" id="RHEA-COMP:9705"/>
        <dbReference type="ChEBI" id="CHEBI:15378"/>
        <dbReference type="ChEBI" id="CHEBI:30616"/>
        <dbReference type="ChEBI" id="CHEBI:33019"/>
        <dbReference type="ChEBI" id="CHEBI:57912"/>
        <dbReference type="ChEBI" id="CHEBI:78442"/>
        <dbReference type="ChEBI" id="CHEBI:78535"/>
        <dbReference type="ChEBI" id="CHEBI:456215"/>
        <dbReference type="EC" id="6.1.1.2"/>
    </reaction>
</comment>
<comment type="subunit">
    <text evidence="1">Homodimer.</text>
</comment>
<comment type="subcellular location">
    <subcellularLocation>
        <location evidence="1">Cytoplasm</location>
    </subcellularLocation>
</comment>
<comment type="similarity">
    <text evidence="1">Belongs to the class-I aminoacyl-tRNA synthetase family.</text>
</comment>
<name>SYW_ECOL6</name>
<dbReference type="EC" id="6.1.1.2" evidence="1"/>
<dbReference type="EMBL" id="AE014075">
    <property type="protein sequence ID" value="AAN82592.1"/>
    <property type="molecule type" value="Genomic_DNA"/>
</dbReference>
<dbReference type="RefSeq" id="WP_000165543.1">
    <property type="nucleotide sequence ID" value="NZ_CP051263.1"/>
</dbReference>
<dbReference type="SMR" id="P67588"/>
<dbReference type="STRING" id="199310.c4154"/>
<dbReference type="GeneID" id="75060042"/>
<dbReference type="KEGG" id="ecc:c4154"/>
<dbReference type="eggNOG" id="COG0180">
    <property type="taxonomic scope" value="Bacteria"/>
</dbReference>
<dbReference type="HOGENOM" id="CLU_029244_1_1_6"/>
<dbReference type="BioCyc" id="ECOL199310:C4154-MONOMER"/>
<dbReference type="Proteomes" id="UP000001410">
    <property type="component" value="Chromosome"/>
</dbReference>
<dbReference type="GO" id="GO:0005829">
    <property type="term" value="C:cytosol"/>
    <property type="evidence" value="ECO:0007669"/>
    <property type="project" value="TreeGrafter"/>
</dbReference>
<dbReference type="GO" id="GO:0005524">
    <property type="term" value="F:ATP binding"/>
    <property type="evidence" value="ECO:0007669"/>
    <property type="project" value="UniProtKB-UniRule"/>
</dbReference>
<dbReference type="GO" id="GO:0004830">
    <property type="term" value="F:tryptophan-tRNA ligase activity"/>
    <property type="evidence" value="ECO:0007669"/>
    <property type="project" value="UniProtKB-UniRule"/>
</dbReference>
<dbReference type="GO" id="GO:0006436">
    <property type="term" value="P:tryptophanyl-tRNA aminoacylation"/>
    <property type="evidence" value="ECO:0007669"/>
    <property type="project" value="UniProtKB-UniRule"/>
</dbReference>
<dbReference type="CDD" id="cd00806">
    <property type="entry name" value="TrpRS_core"/>
    <property type="match status" value="1"/>
</dbReference>
<dbReference type="FunFam" id="1.10.240.10:FF:000002">
    <property type="entry name" value="Tryptophan--tRNA ligase"/>
    <property type="match status" value="1"/>
</dbReference>
<dbReference type="FunFam" id="3.40.50.620:FF:000024">
    <property type="entry name" value="Tryptophan--tRNA ligase"/>
    <property type="match status" value="1"/>
</dbReference>
<dbReference type="Gene3D" id="3.40.50.620">
    <property type="entry name" value="HUPs"/>
    <property type="match status" value="1"/>
</dbReference>
<dbReference type="Gene3D" id="1.10.240.10">
    <property type="entry name" value="Tyrosyl-Transfer RNA Synthetase"/>
    <property type="match status" value="1"/>
</dbReference>
<dbReference type="HAMAP" id="MF_00140_B">
    <property type="entry name" value="Trp_tRNA_synth_B"/>
    <property type="match status" value="1"/>
</dbReference>
<dbReference type="InterPro" id="IPR001412">
    <property type="entry name" value="aa-tRNA-synth_I_CS"/>
</dbReference>
<dbReference type="InterPro" id="IPR002305">
    <property type="entry name" value="aa-tRNA-synth_Ic"/>
</dbReference>
<dbReference type="InterPro" id="IPR014729">
    <property type="entry name" value="Rossmann-like_a/b/a_fold"/>
</dbReference>
<dbReference type="InterPro" id="IPR002306">
    <property type="entry name" value="Trp-tRNA-ligase"/>
</dbReference>
<dbReference type="InterPro" id="IPR024109">
    <property type="entry name" value="Trp-tRNA-ligase_bac-type"/>
</dbReference>
<dbReference type="InterPro" id="IPR050203">
    <property type="entry name" value="Trp-tRNA_synthetase"/>
</dbReference>
<dbReference type="NCBIfam" id="TIGR00233">
    <property type="entry name" value="trpS"/>
    <property type="match status" value="1"/>
</dbReference>
<dbReference type="PANTHER" id="PTHR43766">
    <property type="entry name" value="TRYPTOPHAN--TRNA LIGASE, MITOCHONDRIAL"/>
    <property type="match status" value="1"/>
</dbReference>
<dbReference type="PANTHER" id="PTHR43766:SF1">
    <property type="entry name" value="TRYPTOPHAN--TRNA LIGASE, MITOCHONDRIAL"/>
    <property type="match status" value="1"/>
</dbReference>
<dbReference type="Pfam" id="PF00579">
    <property type="entry name" value="tRNA-synt_1b"/>
    <property type="match status" value="1"/>
</dbReference>
<dbReference type="PRINTS" id="PR01039">
    <property type="entry name" value="TRNASYNTHTRP"/>
</dbReference>
<dbReference type="SUPFAM" id="SSF52374">
    <property type="entry name" value="Nucleotidylyl transferase"/>
    <property type="match status" value="1"/>
</dbReference>
<dbReference type="PROSITE" id="PS00178">
    <property type="entry name" value="AA_TRNA_LIGASE_I"/>
    <property type="match status" value="1"/>
</dbReference>
<feature type="chain" id="PRO_0000136629" description="Tryptophan--tRNA ligase">
    <location>
        <begin position="1"/>
        <end position="334"/>
    </location>
</feature>
<feature type="short sequence motif" description="'HIGH' region" evidence="1">
    <location>
        <begin position="12"/>
        <end position="20"/>
    </location>
</feature>
<feature type="short sequence motif" description="'KMSKS' region" evidence="1">
    <location>
        <begin position="195"/>
        <end position="199"/>
    </location>
</feature>
<feature type="binding site" evidence="1">
    <location>
        <begin position="11"/>
        <end position="13"/>
    </location>
    <ligand>
        <name>ATP</name>
        <dbReference type="ChEBI" id="CHEBI:30616"/>
    </ligand>
</feature>
<feature type="binding site" evidence="1">
    <location>
        <begin position="19"/>
        <end position="20"/>
    </location>
    <ligand>
        <name>ATP</name>
        <dbReference type="ChEBI" id="CHEBI:30616"/>
    </ligand>
</feature>
<feature type="binding site" evidence="1">
    <location>
        <position position="135"/>
    </location>
    <ligand>
        <name>L-tryptophan</name>
        <dbReference type="ChEBI" id="CHEBI:57912"/>
    </ligand>
</feature>
<feature type="binding site" evidence="1">
    <location>
        <begin position="147"/>
        <end position="149"/>
    </location>
    <ligand>
        <name>ATP</name>
        <dbReference type="ChEBI" id="CHEBI:30616"/>
    </ligand>
</feature>
<feature type="binding site" evidence="1">
    <location>
        <position position="186"/>
    </location>
    <ligand>
        <name>ATP</name>
        <dbReference type="ChEBI" id="CHEBI:30616"/>
    </ligand>
</feature>
<feature type="binding site" evidence="1">
    <location>
        <begin position="195"/>
        <end position="199"/>
    </location>
    <ligand>
        <name>ATP</name>
        <dbReference type="ChEBI" id="CHEBI:30616"/>
    </ligand>
</feature>
<organism>
    <name type="scientific">Escherichia coli O6:H1 (strain CFT073 / ATCC 700928 / UPEC)</name>
    <dbReference type="NCBI Taxonomy" id="199310"/>
    <lineage>
        <taxon>Bacteria</taxon>
        <taxon>Pseudomonadati</taxon>
        <taxon>Pseudomonadota</taxon>
        <taxon>Gammaproteobacteria</taxon>
        <taxon>Enterobacterales</taxon>
        <taxon>Enterobacteriaceae</taxon>
        <taxon>Escherichia</taxon>
    </lineage>
</organism>
<gene>
    <name evidence="1" type="primary">trpS</name>
    <name type="ordered locus">c4154</name>
</gene>
<sequence>MTKPIVFSGAQPSGELTIGNYMGALRQWVNMQDDYHCIYCIVDQHAITVRQDAQKLRKATLDTLALYLACGIDPEKSTIFVQSHVPEHAQLGWALNCYTYFGELSRMTQFKDKSARYAENINAGLFDYPVLMAADILLYQTNLVPVGEDQKQHLELSRDIAQRFNALYGDIFKVPEPFIPKSGARVMSLLEPTKKMSKSDDNRNNVIGLLEDPKSVVKKIKRAVTDSDEPPVVRYDVQNKAGVSNLLDILSAVTGQSIPELEKQFEGKMYGHLKGEVADAVSGMLTELQERYHRFRNDEAFLQQVMKDGAEKASAHASRTLKAVYEAIGFVAKP</sequence>
<keyword id="KW-0030">Aminoacyl-tRNA synthetase</keyword>
<keyword id="KW-0067">ATP-binding</keyword>
<keyword id="KW-0963">Cytoplasm</keyword>
<keyword id="KW-0436">Ligase</keyword>
<keyword id="KW-0547">Nucleotide-binding</keyword>
<keyword id="KW-0648">Protein biosynthesis</keyword>
<keyword id="KW-1185">Reference proteome</keyword>